<evidence type="ECO:0000255" key="1">
    <source>
        <dbReference type="HAMAP-Rule" id="MF_00023"/>
    </source>
</evidence>
<gene>
    <name evidence="1" type="primary">smpB</name>
    <name type="ordered locus">Daud_0256</name>
</gene>
<accession>B1I1B6</accession>
<dbReference type="EMBL" id="CP000860">
    <property type="protein sequence ID" value="ACA58817.1"/>
    <property type="molecule type" value="Genomic_DNA"/>
</dbReference>
<dbReference type="RefSeq" id="WP_012301409.1">
    <property type="nucleotide sequence ID" value="NC_010424.1"/>
</dbReference>
<dbReference type="SMR" id="B1I1B6"/>
<dbReference type="STRING" id="477974.Daud_0256"/>
<dbReference type="KEGG" id="dau:Daud_0256"/>
<dbReference type="eggNOG" id="COG0691">
    <property type="taxonomic scope" value="Bacteria"/>
</dbReference>
<dbReference type="HOGENOM" id="CLU_108953_0_0_9"/>
<dbReference type="OrthoDB" id="9805462at2"/>
<dbReference type="Proteomes" id="UP000008544">
    <property type="component" value="Chromosome"/>
</dbReference>
<dbReference type="GO" id="GO:0005829">
    <property type="term" value="C:cytosol"/>
    <property type="evidence" value="ECO:0007669"/>
    <property type="project" value="TreeGrafter"/>
</dbReference>
<dbReference type="GO" id="GO:0003723">
    <property type="term" value="F:RNA binding"/>
    <property type="evidence" value="ECO:0007669"/>
    <property type="project" value="UniProtKB-UniRule"/>
</dbReference>
<dbReference type="GO" id="GO:0070929">
    <property type="term" value="P:trans-translation"/>
    <property type="evidence" value="ECO:0007669"/>
    <property type="project" value="UniProtKB-UniRule"/>
</dbReference>
<dbReference type="CDD" id="cd09294">
    <property type="entry name" value="SmpB"/>
    <property type="match status" value="1"/>
</dbReference>
<dbReference type="Gene3D" id="2.40.280.10">
    <property type="match status" value="1"/>
</dbReference>
<dbReference type="HAMAP" id="MF_00023">
    <property type="entry name" value="SmpB"/>
    <property type="match status" value="1"/>
</dbReference>
<dbReference type="InterPro" id="IPR023620">
    <property type="entry name" value="SmpB"/>
</dbReference>
<dbReference type="InterPro" id="IPR000037">
    <property type="entry name" value="SsrA-bd_prot"/>
</dbReference>
<dbReference type="InterPro" id="IPR020081">
    <property type="entry name" value="SsrA-bd_prot_CS"/>
</dbReference>
<dbReference type="NCBIfam" id="NF003843">
    <property type="entry name" value="PRK05422.1"/>
    <property type="match status" value="1"/>
</dbReference>
<dbReference type="NCBIfam" id="TIGR00086">
    <property type="entry name" value="smpB"/>
    <property type="match status" value="1"/>
</dbReference>
<dbReference type="PANTHER" id="PTHR30308:SF2">
    <property type="entry name" value="SSRA-BINDING PROTEIN"/>
    <property type="match status" value="1"/>
</dbReference>
<dbReference type="PANTHER" id="PTHR30308">
    <property type="entry name" value="TMRNA-BINDING COMPONENT OF TRANS-TRANSLATION TAGGING COMPLEX"/>
    <property type="match status" value="1"/>
</dbReference>
<dbReference type="Pfam" id="PF01668">
    <property type="entry name" value="SmpB"/>
    <property type="match status" value="1"/>
</dbReference>
<dbReference type="SUPFAM" id="SSF74982">
    <property type="entry name" value="Small protein B (SmpB)"/>
    <property type="match status" value="1"/>
</dbReference>
<dbReference type="PROSITE" id="PS01317">
    <property type="entry name" value="SSRP"/>
    <property type="match status" value="1"/>
</dbReference>
<keyword id="KW-0963">Cytoplasm</keyword>
<keyword id="KW-1185">Reference proteome</keyword>
<keyword id="KW-0694">RNA-binding</keyword>
<organism>
    <name type="scientific">Desulforudis audaxviator (strain MP104C)</name>
    <dbReference type="NCBI Taxonomy" id="477974"/>
    <lineage>
        <taxon>Bacteria</taxon>
        <taxon>Bacillati</taxon>
        <taxon>Bacillota</taxon>
        <taxon>Clostridia</taxon>
        <taxon>Thermoanaerobacterales</taxon>
        <taxon>Candidatus Desulforudaceae</taxon>
        <taxon>Candidatus Desulforudis</taxon>
    </lineage>
</organism>
<sequence length="153" mass="17803">MAREPEKTVCQNRKARHEYFILETYEAGLVLKGTEVKSLRAGKANLKDSFARIQNGELWLENMHVSPYEQGNRFNHEPKRPRKLLMHKSEIMRLWGKTREKGLALIPLRVYFKDGRAKVELALAKGKKLYDKRDDIAKREAEREIARAARGKA</sequence>
<name>SSRP_DESAP</name>
<feature type="chain" id="PRO_1000116859" description="SsrA-binding protein">
    <location>
        <begin position="1"/>
        <end position="153"/>
    </location>
</feature>
<protein>
    <recommendedName>
        <fullName evidence="1">SsrA-binding protein</fullName>
    </recommendedName>
    <alternativeName>
        <fullName evidence="1">Small protein B</fullName>
    </alternativeName>
</protein>
<proteinExistence type="inferred from homology"/>
<reference key="1">
    <citation type="submission" date="2007-10" db="EMBL/GenBank/DDBJ databases">
        <title>Complete sequence of chromosome of Desulforudis audaxviator MP104C.</title>
        <authorList>
            <person name="Copeland A."/>
            <person name="Lucas S."/>
            <person name="Lapidus A."/>
            <person name="Barry K."/>
            <person name="Glavina del Rio T."/>
            <person name="Dalin E."/>
            <person name="Tice H."/>
            <person name="Bruce D."/>
            <person name="Pitluck S."/>
            <person name="Lowry S.R."/>
            <person name="Larimer F."/>
            <person name="Land M.L."/>
            <person name="Hauser L."/>
            <person name="Kyrpides N."/>
            <person name="Ivanova N.N."/>
            <person name="Richardson P."/>
        </authorList>
    </citation>
    <scope>NUCLEOTIDE SEQUENCE [LARGE SCALE GENOMIC DNA]</scope>
    <source>
        <strain>MP104C</strain>
    </source>
</reference>
<comment type="function">
    <text evidence="1">Required for rescue of stalled ribosomes mediated by trans-translation. Binds to transfer-messenger RNA (tmRNA), required for stable association of tmRNA with ribosomes. tmRNA and SmpB together mimic tRNA shape, replacing the anticodon stem-loop with SmpB. tmRNA is encoded by the ssrA gene; the 2 termini fold to resemble tRNA(Ala) and it encodes a 'tag peptide', a short internal open reading frame. During trans-translation Ala-aminoacylated tmRNA acts like a tRNA, entering the A-site of stalled ribosomes, displacing the stalled mRNA. The ribosome then switches to translate the ORF on the tmRNA; the nascent peptide is terminated with the 'tag peptide' encoded by the tmRNA and targeted for degradation. The ribosome is freed to recommence translation, which seems to be the essential function of trans-translation.</text>
</comment>
<comment type="subcellular location">
    <subcellularLocation>
        <location evidence="1">Cytoplasm</location>
    </subcellularLocation>
    <text evidence="1">The tmRNA-SmpB complex associates with stalled 70S ribosomes.</text>
</comment>
<comment type="similarity">
    <text evidence="1">Belongs to the SmpB family.</text>
</comment>